<reference key="1">
    <citation type="journal article" date="2008" name="Genome Biol.">
        <title>A genomic analysis of the archaeal system Ignicoccus hospitalis-Nanoarchaeum equitans.</title>
        <authorList>
            <person name="Podar M."/>
            <person name="Anderson I."/>
            <person name="Makarova K.S."/>
            <person name="Elkins J.G."/>
            <person name="Ivanova N."/>
            <person name="Wall M.A."/>
            <person name="Lykidis A."/>
            <person name="Mavromatis K."/>
            <person name="Sun H."/>
            <person name="Hudson M.E."/>
            <person name="Chen W."/>
            <person name="Deciu C."/>
            <person name="Hutchison D."/>
            <person name="Eads J.R."/>
            <person name="Anderson A."/>
            <person name="Fernandes F."/>
            <person name="Szeto E."/>
            <person name="Lapidus A."/>
            <person name="Kyrpides N.C."/>
            <person name="Saier M.H. Jr."/>
            <person name="Richardson P.M."/>
            <person name="Rachel R."/>
            <person name="Huber H."/>
            <person name="Eisen J.A."/>
            <person name="Koonin E.V."/>
            <person name="Keller M."/>
            <person name="Stetter K.O."/>
        </authorList>
    </citation>
    <scope>NUCLEOTIDE SEQUENCE [LARGE SCALE GENOMIC DNA]</scope>
    <source>
        <strain>KIN4/I / DSM 18386 / JCM 14125</strain>
    </source>
</reference>
<feature type="chain" id="PRO_0000335575" description="Pyridoxal 5'-phosphate synthase subunit PdxT">
    <location>
        <begin position="1"/>
        <end position="197"/>
    </location>
</feature>
<feature type="active site" description="Nucleophile" evidence="1">
    <location>
        <position position="84"/>
    </location>
</feature>
<feature type="active site" description="Charge relay system" evidence="1">
    <location>
        <position position="179"/>
    </location>
</feature>
<feature type="active site" description="Charge relay system" evidence="1">
    <location>
        <position position="181"/>
    </location>
</feature>
<feature type="binding site" evidence="1">
    <location>
        <begin position="52"/>
        <end position="54"/>
    </location>
    <ligand>
        <name>L-glutamine</name>
        <dbReference type="ChEBI" id="CHEBI:58359"/>
    </ligand>
</feature>
<feature type="binding site" evidence="1">
    <location>
        <position position="116"/>
    </location>
    <ligand>
        <name>L-glutamine</name>
        <dbReference type="ChEBI" id="CHEBI:58359"/>
    </ligand>
</feature>
<feature type="binding site" evidence="1">
    <location>
        <begin position="143"/>
        <end position="144"/>
    </location>
    <ligand>
        <name>L-glutamine</name>
        <dbReference type="ChEBI" id="CHEBI:58359"/>
    </ligand>
</feature>
<keyword id="KW-0315">Glutamine amidotransferase</keyword>
<keyword id="KW-0378">Hydrolase</keyword>
<keyword id="KW-0456">Lyase</keyword>
<keyword id="KW-0663">Pyridoxal phosphate</keyword>
<keyword id="KW-1185">Reference proteome</keyword>
<sequence>MKVGVLALQGGVVEHIYMIREAAKRLGKEVEVVEVRKPEHLNSLRAIVLPGGESTAMYKLGKRTGLDKRLKEALLEGLPALGTCAGAALLAREIEDKQSGKRYEPLLGVADFKVVRNFFGRQRESFEANLNIKGIGTFRGVFIRAPVMVPLSPAVEVLGEFKGNAVMVKQGNIIATSFHPELTSDTRIHEMLLSEAS</sequence>
<evidence type="ECO:0000255" key="1">
    <source>
        <dbReference type="HAMAP-Rule" id="MF_01615"/>
    </source>
</evidence>
<accession>A8A8T7</accession>
<organism>
    <name type="scientific">Ignicoccus hospitalis (strain KIN4/I / DSM 18386 / JCM 14125)</name>
    <dbReference type="NCBI Taxonomy" id="453591"/>
    <lineage>
        <taxon>Archaea</taxon>
        <taxon>Thermoproteota</taxon>
        <taxon>Thermoprotei</taxon>
        <taxon>Desulfurococcales</taxon>
        <taxon>Desulfurococcaceae</taxon>
        <taxon>Ignicoccus</taxon>
    </lineage>
</organism>
<comment type="function">
    <text evidence="1">Catalyzes the hydrolysis of glutamine to glutamate and ammonia as part of the biosynthesis of pyridoxal 5'-phosphate. The resulting ammonia molecule is channeled to the active site of PdxS.</text>
</comment>
<comment type="catalytic activity">
    <reaction evidence="1">
        <text>aldehydo-D-ribose 5-phosphate + D-glyceraldehyde 3-phosphate + L-glutamine = pyridoxal 5'-phosphate + L-glutamate + phosphate + 3 H2O + H(+)</text>
        <dbReference type="Rhea" id="RHEA:31507"/>
        <dbReference type="ChEBI" id="CHEBI:15377"/>
        <dbReference type="ChEBI" id="CHEBI:15378"/>
        <dbReference type="ChEBI" id="CHEBI:29985"/>
        <dbReference type="ChEBI" id="CHEBI:43474"/>
        <dbReference type="ChEBI" id="CHEBI:58273"/>
        <dbReference type="ChEBI" id="CHEBI:58359"/>
        <dbReference type="ChEBI" id="CHEBI:59776"/>
        <dbReference type="ChEBI" id="CHEBI:597326"/>
        <dbReference type="EC" id="4.3.3.6"/>
    </reaction>
</comment>
<comment type="catalytic activity">
    <reaction evidence="1">
        <text>L-glutamine + H2O = L-glutamate + NH4(+)</text>
        <dbReference type="Rhea" id="RHEA:15889"/>
        <dbReference type="ChEBI" id="CHEBI:15377"/>
        <dbReference type="ChEBI" id="CHEBI:28938"/>
        <dbReference type="ChEBI" id="CHEBI:29985"/>
        <dbReference type="ChEBI" id="CHEBI:58359"/>
        <dbReference type="EC" id="3.5.1.2"/>
    </reaction>
</comment>
<comment type="pathway">
    <text evidence="1">Cofactor biosynthesis; pyridoxal 5'-phosphate biosynthesis.</text>
</comment>
<comment type="subunit">
    <text evidence="1">In the presence of PdxS, forms a dodecamer of heterodimers. Only shows activity in the heterodimer.</text>
</comment>
<comment type="similarity">
    <text evidence="1">Belongs to the glutaminase PdxT/SNO family.</text>
</comment>
<name>PDXT_IGNH4</name>
<protein>
    <recommendedName>
        <fullName evidence="1">Pyridoxal 5'-phosphate synthase subunit PdxT</fullName>
        <ecNumber evidence="1">4.3.3.6</ecNumber>
    </recommendedName>
    <alternativeName>
        <fullName evidence="1">Pdx2</fullName>
    </alternativeName>
    <alternativeName>
        <fullName evidence="1">Pyridoxal 5'-phosphate synthase glutaminase subunit</fullName>
        <ecNumber evidence="1">3.5.1.2</ecNumber>
    </alternativeName>
</protein>
<gene>
    <name evidence="1" type="primary">pdxT</name>
    <name type="ordered locus">Igni_0155</name>
</gene>
<proteinExistence type="inferred from homology"/>
<dbReference type="EC" id="4.3.3.6" evidence="1"/>
<dbReference type="EC" id="3.5.1.2" evidence="1"/>
<dbReference type="EMBL" id="CP000816">
    <property type="protein sequence ID" value="ABU81339.1"/>
    <property type="molecule type" value="Genomic_DNA"/>
</dbReference>
<dbReference type="RefSeq" id="WP_052569776.1">
    <property type="nucleotide sequence ID" value="NC_009776.1"/>
</dbReference>
<dbReference type="SMR" id="A8A8T7"/>
<dbReference type="STRING" id="453591.Igni_0155"/>
<dbReference type="MEROPS" id="C26.A32"/>
<dbReference type="GeneID" id="5562842"/>
<dbReference type="KEGG" id="iho:Igni_0155"/>
<dbReference type="eggNOG" id="arCOG00034">
    <property type="taxonomic scope" value="Archaea"/>
</dbReference>
<dbReference type="HOGENOM" id="CLU_069674_2_0_2"/>
<dbReference type="OrthoDB" id="26717at2157"/>
<dbReference type="UniPathway" id="UPA00245"/>
<dbReference type="Proteomes" id="UP000000262">
    <property type="component" value="Chromosome"/>
</dbReference>
<dbReference type="GO" id="GO:0005829">
    <property type="term" value="C:cytosol"/>
    <property type="evidence" value="ECO:0007669"/>
    <property type="project" value="TreeGrafter"/>
</dbReference>
<dbReference type="GO" id="GO:1903600">
    <property type="term" value="C:glutaminase complex"/>
    <property type="evidence" value="ECO:0007669"/>
    <property type="project" value="TreeGrafter"/>
</dbReference>
<dbReference type="GO" id="GO:0004359">
    <property type="term" value="F:glutaminase activity"/>
    <property type="evidence" value="ECO:0007669"/>
    <property type="project" value="UniProtKB-UniRule"/>
</dbReference>
<dbReference type="GO" id="GO:0036381">
    <property type="term" value="F:pyridoxal 5'-phosphate synthase (glutamine hydrolysing) activity"/>
    <property type="evidence" value="ECO:0007669"/>
    <property type="project" value="UniProtKB-UniRule"/>
</dbReference>
<dbReference type="GO" id="GO:0006543">
    <property type="term" value="P:glutamine catabolic process"/>
    <property type="evidence" value="ECO:0007669"/>
    <property type="project" value="UniProtKB-UniRule"/>
</dbReference>
<dbReference type="GO" id="GO:0042823">
    <property type="term" value="P:pyridoxal phosphate biosynthetic process"/>
    <property type="evidence" value="ECO:0007669"/>
    <property type="project" value="UniProtKB-UniRule"/>
</dbReference>
<dbReference type="GO" id="GO:0008614">
    <property type="term" value="P:pyridoxine metabolic process"/>
    <property type="evidence" value="ECO:0007669"/>
    <property type="project" value="TreeGrafter"/>
</dbReference>
<dbReference type="CDD" id="cd01749">
    <property type="entry name" value="GATase1_PB"/>
    <property type="match status" value="1"/>
</dbReference>
<dbReference type="FunFam" id="3.40.50.880:FF:000041">
    <property type="entry name" value="Glutamine amidotransferase subunit pdxT, putative"/>
    <property type="match status" value="1"/>
</dbReference>
<dbReference type="Gene3D" id="3.40.50.880">
    <property type="match status" value="1"/>
</dbReference>
<dbReference type="HAMAP" id="MF_01615">
    <property type="entry name" value="PdxT"/>
    <property type="match status" value="1"/>
</dbReference>
<dbReference type="InterPro" id="IPR029062">
    <property type="entry name" value="Class_I_gatase-like"/>
</dbReference>
<dbReference type="InterPro" id="IPR002161">
    <property type="entry name" value="PdxT/SNO"/>
</dbReference>
<dbReference type="InterPro" id="IPR021196">
    <property type="entry name" value="PdxT/SNO_CS"/>
</dbReference>
<dbReference type="NCBIfam" id="TIGR03800">
    <property type="entry name" value="PLP_synth_Pdx2"/>
    <property type="match status" value="1"/>
</dbReference>
<dbReference type="PANTHER" id="PTHR31559">
    <property type="entry name" value="PYRIDOXAL 5'-PHOSPHATE SYNTHASE SUBUNIT SNO"/>
    <property type="match status" value="1"/>
</dbReference>
<dbReference type="PANTHER" id="PTHR31559:SF0">
    <property type="entry name" value="PYRIDOXAL 5'-PHOSPHATE SYNTHASE SUBUNIT SNO1-RELATED"/>
    <property type="match status" value="1"/>
</dbReference>
<dbReference type="Pfam" id="PF01174">
    <property type="entry name" value="SNO"/>
    <property type="match status" value="1"/>
</dbReference>
<dbReference type="PIRSF" id="PIRSF005639">
    <property type="entry name" value="Glut_amidoT_SNO"/>
    <property type="match status" value="1"/>
</dbReference>
<dbReference type="SUPFAM" id="SSF52317">
    <property type="entry name" value="Class I glutamine amidotransferase-like"/>
    <property type="match status" value="1"/>
</dbReference>
<dbReference type="PROSITE" id="PS01236">
    <property type="entry name" value="PDXT_SNO_1"/>
    <property type="match status" value="1"/>
</dbReference>
<dbReference type="PROSITE" id="PS51130">
    <property type="entry name" value="PDXT_SNO_2"/>
    <property type="match status" value="1"/>
</dbReference>